<organism>
    <name type="scientific">Bacillus subtilis (strain 168)</name>
    <dbReference type="NCBI Taxonomy" id="224308"/>
    <lineage>
        <taxon>Bacteria</taxon>
        <taxon>Bacillati</taxon>
        <taxon>Bacillota</taxon>
        <taxon>Bacilli</taxon>
        <taxon>Bacillales</taxon>
        <taxon>Bacillaceae</taxon>
        <taxon>Bacillus</taxon>
    </lineage>
</organism>
<comment type="function">
    <text>Cleaves the linkage of the L-alanine-D-glutamic acid of B.subtilis cell wall.</text>
</comment>
<comment type="biophysicochemical properties">
    <phDependence>
        <text evidence="2">Optimum pH is 6.5.</text>
    </phDependence>
    <temperatureDependence>
        <text evidence="2">Optimum temperature is 37 degrees Celsius.</text>
    </temperatureDependence>
</comment>
<comment type="subcellular location">
    <subcellularLocation>
        <location evidence="2">Cell membrane</location>
    </subcellularLocation>
</comment>
<comment type="developmental stage">
    <text>Expressed during vegetative growth phase.</text>
</comment>
<comment type="similarity">
    <text evidence="3">Belongs to the peptidase M15C family.</text>
</comment>
<feature type="signal peptide" evidence="1">
    <location>
        <begin position="1"/>
        <end position="26"/>
    </location>
</feature>
<feature type="chain" id="PRO_0000297706" description="Peptidoglycan L-alanyl-D-glutamate endopeptidase CwlK">
    <location>
        <begin position="27"/>
        <end position="167"/>
    </location>
</feature>
<protein>
    <recommendedName>
        <fullName>Peptidoglycan L-alanyl-D-glutamate endopeptidase CwlK</fullName>
        <ecNumber>3.4.-.-</ecNumber>
    </recommendedName>
</protein>
<proteinExistence type="evidence at protein level"/>
<name>CWLK_BACSU</name>
<accession>O34360</accession>
<accession>Q797R8</accession>
<reference key="1">
    <citation type="journal article" date="1997" name="Microbiology">
        <title>A 32 kb nucleotide sequence from the region of the lincomycin-resistance gene (22 degrees-25 degrees) of the Bacillus subtilis chromosome and identification of the site of the lin-2 mutation.</title>
        <authorList>
            <person name="Kumano M."/>
            <person name="Tamakoshi A."/>
            <person name="Yamane K."/>
        </authorList>
    </citation>
    <scope>NUCLEOTIDE SEQUENCE [GENOMIC DNA]</scope>
    <source>
        <strain>168</strain>
    </source>
</reference>
<reference key="2">
    <citation type="journal article" date="1997" name="Nature">
        <title>The complete genome sequence of the Gram-positive bacterium Bacillus subtilis.</title>
        <authorList>
            <person name="Kunst F."/>
            <person name="Ogasawara N."/>
            <person name="Moszer I."/>
            <person name="Albertini A.M."/>
            <person name="Alloni G."/>
            <person name="Azevedo V."/>
            <person name="Bertero M.G."/>
            <person name="Bessieres P."/>
            <person name="Bolotin A."/>
            <person name="Borchert S."/>
            <person name="Borriss R."/>
            <person name="Boursier L."/>
            <person name="Brans A."/>
            <person name="Braun M."/>
            <person name="Brignell S.C."/>
            <person name="Bron S."/>
            <person name="Brouillet S."/>
            <person name="Bruschi C.V."/>
            <person name="Caldwell B."/>
            <person name="Capuano V."/>
            <person name="Carter N.M."/>
            <person name="Choi S.-K."/>
            <person name="Codani J.-J."/>
            <person name="Connerton I.F."/>
            <person name="Cummings N.J."/>
            <person name="Daniel R.A."/>
            <person name="Denizot F."/>
            <person name="Devine K.M."/>
            <person name="Duesterhoeft A."/>
            <person name="Ehrlich S.D."/>
            <person name="Emmerson P.T."/>
            <person name="Entian K.-D."/>
            <person name="Errington J."/>
            <person name="Fabret C."/>
            <person name="Ferrari E."/>
            <person name="Foulger D."/>
            <person name="Fritz C."/>
            <person name="Fujita M."/>
            <person name="Fujita Y."/>
            <person name="Fuma S."/>
            <person name="Galizzi A."/>
            <person name="Galleron N."/>
            <person name="Ghim S.-Y."/>
            <person name="Glaser P."/>
            <person name="Goffeau A."/>
            <person name="Golightly E.J."/>
            <person name="Grandi G."/>
            <person name="Guiseppi G."/>
            <person name="Guy B.J."/>
            <person name="Haga K."/>
            <person name="Haiech J."/>
            <person name="Harwood C.R."/>
            <person name="Henaut A."/>
            <person name="Hilbert H."/>
            <person name="Holsappel S."/>
            <person name="Hosono S."/>
            <person name="Hullo M.-F."/>
            <person name="Itaya M."/>
            <person name="Jones L.-M."/>
            <person name="Joris B."/>
            <person name="Karamata D."/>
            <person name="Kasahara Y."/>
            <person name="Klaerr-Blanchard M."/>
            <person name="Klein C."/>
            <person name="Kobayashi Y."/>
            <person name="Koetter P."/>
            <person name="Koningstein G."/>
            <person name="Krogh S."/>
            <person name="Kumano M."/>
            <person name="Kurita K."/>
            <person name="Lapidus A."/>
            <person name="Lardinois S."/>
            <person name="Lauber J."/>
            <person name="Lazarevic V."/>
            <person name="Lee S.-M."/>
            <person name="Levine A."/>
            <person name="Liu H."/>
            <person name="Masuda S."/>
            <person name="Mauel C."/>
            <person name="Medigue C."/>
            <person name="Medina N."/>
            <person name="Mellado R.P."/>
            <person name="Mizuno M."/>
            <person name="Moestl D."/>
            <person name="Nakai S."/>
            <person name="Noback M."/>
            <person name="Noone D."/>
            <person name="O'Reilly M."/>
            <person name="Ogawa K."/>
            <person name="Ogiwara A."/>
            <person name="Oudega B."/>
            <person name="Park S.-H."/>
            <person name="Parro V."/>
            <person name="Pohl T.M."/>
            <person name="Portetelle D."/>
            <person name="Porwollik S."/>
            <person name="Prescott A.M."/>
            <person name="Presecan E."/>
            <person name="Pujic P."/>
            <person name="Purnelle B."/>
            <person name="Rapoport G."/>
            <person name="Rey M."/>
            <person name="Reynolds S."/>
            <person name="Rieger M."/>
            <person name="Rivolta C."/>
            <person name="Rocha E."/>
            <person name="Roche B."/>
            <person name="Rose M."/>
            <person name="Sadaie Y."/>
            <person name="Sato T."/>
            <person name="Scanlan E."/>
            <person name="Schleich S."/>
            <person name="Schroeter R."/>
            <person name="Scoffone F."/>
            <person name="Sekiguchi J."/>
            <person name="Sekowska A."/>
            <person name="Seror S.J."/>
            <person name="Serror P."/>
            <person name="Shin B.-S."/>
            <person name="Soldo B."/>
            <person name="Sorokin A."/>
            <person name="Tacconi E."/>
            <person name="Takagi T."/>
            <person name="Takahashi H."/>
            <person name="Takemaru K."/>
            <person name="Takeuchi M."/>
            <person name="Tamakoshi A."/>
            <person name="Tanaka T."/>
            <person name="Terpstra P."/>
            <person name="Tognoni A."/>
            <person name="Tosato V."/>
            <person name="Uchiyama S."/>
            <person name="Vandenbol M."/>
            <person name="Vannier F."/>
            <person name="Vassarotti A."/>
            <person name="Viari A."/>
            <person name="Wambutt R."/>
            <person name="Wedler E."/>
            <person name="Wedler H."/>
            <person name="Weitzenegger T."/>
            <person name="Winters P."/>
            <person name="Wipat A."/>
            <person name="Yamamoto H."/>
            <person name="Yamane K."/>
            <person name="Yasumoto K."/>
            <person name="Yata K."/>
            <person name="Yoshida K."/>
            <person name="Yoshikawa H.-F."/>
            <person name="Zumstein E."/>
            <person name="Yoshikawa H."/>
            <person name="Danchin A."/>
        </authorList>
    </citation>
    <scope>NUCLEOTIDE SEQUENCE [LARGE SCALE GENOMIC DNA]</scope>
    <source>
        <strain>168</strain>
    </source>
</reference>
<reference key="3">
    <citation type="journal article" date="2007" name="Mol. Genet. Genomics">
        <title>Characterization of new L,D-endopeptidase gene product CwlK (previous YcdD) that hydrolyzes peptidoglycan in Bacillus subtilis.</title>
        <authorList>
            <person name="Fukushima T."/>
            <person name="Yao Y."/>
            <person name="Kitajima T."/>
            <person name="Yamamoto H."/>
            <person name="Sekiguchi J."/>
        </authorList>
    </citation>
    <scope>CATALYTIC ACTIVITY</scope>
    <scope>BIOPHYSICOCHEMICAL PROPERTIES</scope>
    <scope>SUBCELLULAR LOCATION</scope>
    <scope>EXPRESSION</scope>
    <source>
        <strain>168</strain>
    </source>
</reference>
<gene>
    <name type="primary">cwlK</name>
    <name type="synonym">ycdD</name>
    <name type="ordered locus">BSU02810</name>
</gene>
<dbReference type="EC" id="3.4.-.-"/>
<dbReference type="EMBL" id="AB000617">
    <property type="protein sequence ID" value="BAA22242.1"/>
    <property type="molecule type" value="Genomic_DNA"/>
</dbReference>
<dbReference type="EMBL" id="AL009126">
    <property type="protein sequence ID" value="CAB12075.1"/>
    <property type="molecule type" value="Genomic_DNA"/>
</dbReference>
<dbReference type="PIR" id="F69755">
    <property type="entry name" value="F69755"/>
</dbReference>
<dbReference type="RefSeq" id="NP_388163.1">
    <property type="nucleotide sequence ID" value="NC_000964.3"/>
</dbReference>
<dbReference type="RefSeq" id="WP_009966473.1">
    <property type="nucleotide sequence ID" value="NZ_OZ025638.1"/>
</dbReference>
<dbReference type="SMR" id="O34360"/>
<dbReference type="FunCoup" id="O34360">
    <property type="interactions" value="2"/>
</dbReference>
<dbReference type="STRING" id="224308.BSU02810"/>
<dbReference type="MEROPS" id="M15.A05"/>
<dbReference type="PaxDb" id="224308-BSU02810"/>
<dbReference type="EnsemblBacteria" id="CAB12075">
    <property type="protein sequence ID" value="CAB12075"/>
    <property type="gene ID" value="BSU_02810"/>
</dbReference>
<dbReference type="GeneID" id="938378"/>
<dbReference type="KEGG" id="bsu:BSU02810"/>
<dbReference type="PATRIC" id="fig|224308.179.peg.292"/>
<dbReference type="eggNOG" id="COG1876">
    <property type="taxonomic scope" value="Bacteria"/>
</dbReference>
<dbReference type="InParanoid" id="O34360"/>
<dbReference type="OrthoDB" id="9799970at2"/>
<dbReference type="PhylomeDB" id="O34360"/>
<dbReference type="BioCyc" id="BSUB:BSU02810-MONOMER"/>
<dbReference type="BRENDA" id="3.4.24.B24">
    <property type="organism ID" value="658"/>
</dbReference>
<dbReference type="Proteomes" id="UP000001570">
    <property type="component" value="Chromosome"/>
</dbReference>
<dbReference type="GO" id="GO:0005886">
    <property type="term" value="C:plasma membrane"/>
    <property type="evidence" value="ECO:0007669"/>
    <property type="project" value="UniProtKB-SubCell"/>
</dbReference>
<dbReference type="GO" id="GO:0008233">
    <property type="term" value="F:peptidase activity"/>
    <property type="evidence" value="ECO:0007669"/>
    <property type="project" value="InterPro"/>
</dbReference>
<dbReference type="GO" id="GO:0071555">
    <property type="term" value="P:cell wall organization"/>
    <property type="evidence" value="ECO:0007669"/>
    <property type="project" value="UniProtKB-KW"/>
</dbReference>
<dbReference type="CDD" id="cd14845">
    <property type="entry name" value="L-Ala-D-Glu_peptidase_like"/>
    <property type="match status" value="1"/>
</dbReference>
<dbReference type="Gene3D" id="3.30.1380.10">
    <property type="match status" value="1"/>
</dbReference>
<dbReference type="InterPro" id="IPR052179">
    <property type="entry name" value="Bact_PeptidoProc_Enz"/>
</dbReference>
<dbReference type="InterPro" id="IPR009045">
    <property type="entry name" value="Hedgehog_sig/DD-Pept_Zn-bd_sf"/>
</dbReference>
<dbReference type="InterPro" id="IPR039561">
    <property type="entry name" value="Peptidase_M15C"/>
</dbReference>
<dbReference type="PANTHER" id="PTHR34385">
    <property type="entry name" value="D-ALANYL-D-ALANINE CARBOXYPEPTIDASE"/>
    <property type="match status" value="1"/>
</dbReference>
<dbReference type="PANTHER" id="PTHR34385:SF1">
    <property type="entry name" value="PEPTIDOGLYCAN L-ALANYL-D-GLUTAMATE ENDOPEPTIDASE CWLK"/>
    <property type="match status" value="1"/>
</dbReference>
<dbReference type="Pfam" id="PF13539">
    <property type="entry name" value="Peptidase_M15_4"/>
    <property type="match status" value="1"/>
</dbReference>
<dbReference type="SUPFAM" id="SSF55166">
    <property type="entry name" value="Hedgehog/DD-peptidase"/>
    <property type="match status" value="1"/>
</dbReference>
<evidence type="ECO:0000255" key="1"/>
<evidence type="ECO:0000269" key="2">
    <source>
    </source>
</evidence>
<evidence type="ECO:0000305" key="3"/>
<keyword id="KW-1003">Cell membrane</keyword>
<keyword id="KW-0961">Cell wall biogenesis/degradation</keyword>
<keyword id="KW-0378">Hydrolase</keyword>
<keyword id="KW-0472">Membrane</keyword>
<keyword id="KW-1185">Reference proteome</keyword>
<keyword id="KW-0732">Signal</keyword>
<sequence length="167" mass="19113">MNLPAKTFVILCILFLLDLCFSYIRHEWHSQNALQDMPVPSDLHPIVKQNADALKAAAANKGIDVVITEGFRSFKEQDELYKQGRTKKGNIVTYARGGESYHNYGLAIDFALQKKDGSIIWDMEYDGNQNGKSDWLEVVEIAKTLGFEWGGDWKRFKDYPHLEMIPN</sequence>